<name>TRPA_PSESY</name>
<dbReference type="EC" id="4.2.1.20" evidence="1"/>
<dbReference type="EMBL" id="M95710">
    <property type="protein sequence ID" value="AAA26013.1"/>
    <property type="molecule type" value="Genomic_DNA"/>
</dbReference>
<dbReference type="PIR" id="JQ2127">
    <property type="entry name" value="JQ2127"/>
</dbReference>
<dbReference type="SMR" id="P34816"/>
<dbReference type="UniPathway" id="UPA00035">
    <property type="reaction ID" value="UER00044"/>
</dbReference>
<dbReference type="GO" id="GO:0005829">
    <property type="term" value="C:cytosol"/>
    <property type="evidence" value="ECO:0007669"/>
    <property type="project" value="TreeGrafter"/>
</dbReference>
<dbReference type="GO" id="GO:0004834">
    <property type="term" value="F:tryptophan synthase activity"/>
    <property type="evidence" value="ECO:0007669"/>
    <property type="project" value="UniProtKB-UniRule"/>
</dbReference>
<dbReference type="CDD" id="cd04724">
    <property type="entry name" value="Tryptophan_synthase_alpha"/>
    <property type="match status" value="1"/>
</dbReference>
<dbReference type="FunFam" id="3.20.20.70:FF:000037">
    <property type="entry name" value="Tryptophan synthase alpha chain"/>
    <property type="match status" value="1"/>
</dbReference>
<dbReference type="Gene3D" id="3.20.20.70">
    <property type="entry name" value="Aldolase class I"/>
    <property type="match status" value="1"/>
</dbReference>
<dbReference type="HAMAP" id="MF_00131">
    <property type="entry name" value="Trp_synth_alpha"/>
    <property type="match status" value="1"/>
</dbReference>
<dbReference type="InterPro" id="IPR013785">
    <property type="entry name" value="Aldolase_TIM"/>
</dbReference>
<dbReference type="InterPro" id="IPR011060">
    <property type="entry name" value="RibuloseP-bd_barrel"/>
</dbReference>
<dbReference type="InterPro" id="IPR018204">
    <property type="entry name" value="Trp_synthase_alpha_AS"/>
</dbReference>
<dbReference type="InterPro" id="IPR002028">
    <property type="entry name" value="Trp_synthase_suA"/>
</dbReference>
<dbReference type="NCBIfam" id="TIGR00262">
    <property type="entry name" value="trpA"/>
    <property type="match status" value="1"/>
</dbReference>
<dbReference type="PANTHER" id="PTHR43406:SF1">
    <property type="entry name" value="TRYPTOPHAN SYNTHASE ALPHA CHAIN, CHLOROPLASTIC"/>
    <property type="match status" value="1"/>
</dbReference>
<dbReference type="PANTHER" id="PTHR43406">
    <property type="entry name" value="TRYPTOPHAN SYNTHASE, ALPHA CHAIN"/>
    <property type="match status" value="1"/>
</dbReference>
<dbReference type="Pfam" id="PF00290">
    <property type="entry name" value="Trp_syntA"/>
    <property type="match status" value="1"/>
</dbReference>
<dbReference type="SUPFAM" id="SSF51366">
    <property type="entry name" value="Ribulose-phoshate binding barrel"/>
    <property type="match status" value="1"/>
</dbReference>
<dbReference type="PROSITE" id="PS00167">
    <property type="entry name" value="TRP_SYNTHASE_ALPHA"/>
    <property type="match status" value="1"/>
</dbReference>
<evidence type="ECO:0000255" key="1">
    <source>
        <dbReference type="HAMAP-Rule" id="MF_00131"/>
    </source>
</evidence>
<accession>P34816</accession>
<keyword id="KW-0028">Amino-acid biosynthesis</keyword>
<keyword id="KW-0057">Aromatic amino acid biosynthesis</keyword>
<keyword id="KW-0456">Lyase</keyword>
<keyword id="KW-0822">Tryptophan biosynthesis</keyword>
<sequence length="269" mass="28440">MSRLQTRFDQLKEQNRAALVTFVTAGDPGYDTSLAILKGLPAAGADVIELGMPFTDPMADGPAIQLANIRALEAKQNLLKTLQMVREFRKGNNDTPLVLMGYFNPIHKYGVPKFIADAKEAGVDGLIVVDMPPEHNGELCDPAQAAGIDFIRLTTPTTDDVRLPTVLNGSSGFVYYVSVAGVTGAGAATLEHVEEAVARLRRHTDLPISIGFGIRTPEQAAAIARLADGVVVGSALIDHIANAKNDQQAIDGVLGLCAALSEGVRNASV</sequence>
<comment type="function">
    <text evidence="1">The alpha subunit is responsible for the aldol cleavage of indoleglycerol phosphate to indole and glyceraldehyde 3-phosphate.</text>
</comment>
<comment type="catalytic activity">
    <reaction evidence="1">
        <text>(1S,2R)-1-C-(indol-3-yl)glycerol 3-phosphate + L-serine = D-glyceraldehyde 3-phosphate + L-tryptophan + H2O</text>
        <dbReference type="Rhea" id="RHEA:10532"/>
        <dbReference type="ChEBI" id="CHEBI:15377"/>
        <dbReference type="ChEBI" id="CHEBI:33384"/>
        <dbReference type="ChEBI" id="CHEBI:57912"/>
        <dbReference type="ChEBI" id="CHEBI:58866"/>
        <dbReference type="ChEBI" id="CHEBI:59776"/>
        <dbReference type="EC" id="4.2.1.20"/>
    </reaction>
</comment>
<comment type="pathway">
    <text evidence="1">Amino-acid biosynthesis; L-tryptophan biosynthesis; L-tryptophan from chorismate: step 5/5.</text>
</comment>
<comment type="subunit">
    <text evidence="1">Tetramer of two alpha and two beta chains.</text>
</comment>
<comment type="similarity">
    <text evidence="1">Belongs to the TrpA family.</text>
</comment>
<reference key="1">
    <citation type="journal article" date="1993" name="Gene">
        <title>Nucleotide sequences of the trpI, trpB, and trpA genes of Pseudomonas syringae: positive control unique to fluorescent pseudomonads.</title>
        <authorList>
            <person name="Auerbach S."/>
            <person name="Gao J."/>
            <person name="Gussin G.N."/>
        </authorList>
    </citation>
    <scope>NUCLEOTIDE SEQUENCE [GENOMIC DNA]</scope>
</reference>
<protein>
    <recommendedName>
        <fullName evidence="1">Tryptophan synthase alpha chain</fullName>
        <ecNumber evidence="1">4.2.1.20</ecNumber>
    </recommendedName>
</protein>
<feature type="chain" id="PRO_0000098829" description="Tryptophan synthase alpha chain">
    <location>
        <begin position="1"/>
        <end position="269"/>
    </location>
</feature>
<feature type="active site" description="Proton acceptor" evidence="1">
    <location>
        <position position="49"/>
    </location>
</feature>
<feature type="active site" description="Proton acceptor" evidence="1">
    <location>
        <position position="60"/>
    </location>
</feature>
<proteinExistence type="inferred from homology"/>
<organism>
    <name type="scientific">Pseudomonas syringae pv. syringae</name>
    <dbReference type="NCBI Taxonomy" id="321"/>
    <lineage>
        <taxon>Bacteria</taxon>
        <taxon>Pseudomonadati</taxon>
        <taxon>Pseudomonadota</taxon>
        <taxon>Gammaproteobacteria</taxon>
        <taxon>Pseudomonadales</taxon>
        <taxon>Pseudomonadaceae</taxon>
        <taxon>Pseudomonas</taxon>
        <taxon>Pseudomonas syringae</taxon>
    </lineage>
</organism>
<gene>
    <name evidence="1" type="primary">trpA</name>
</gene>